<reference key="1">
    <citation type="journal article" date="2008" name="DNA Res.">
        <title>The whole-genome sequencing of the obligate intracellular bacterium Orientia tsutsugamushi revealed massive gene amplification during reductive genome evolution.</title>
        <authorList>
            <person name="Nakayama K."/>
            <person name="Yamashita A."/>
            <person name="Kurokawa K."/>
            <person name="Morimoto T."/>
            <person name="Ogawa M."/>
            <person name="Fukuhara M."/>
            <person name="Urakami H."/>
            <person name="Ohnishi M."/>
            <person name="Uchiyama I."/>
            <person name="Ogura Y."/>
            <person name="Ooka T."/>
            <person name="Oshima K."/>
            <person name="Tamura A."/>
            <person name="Hattori M."/>
            <person name="Hayashi T."/>
        </authorList>
    </citation>
    <scope>NUCLEOTIDE SEQUENCE [LARGE SCALE GENOMIC DNA]</scope>
    <source>
        <strain>Ikeda</strain>
    </source>
</reference>
<gene>
    <name type="ordered locus">OTT_1322</name>
</gene>
<organism>
    <name type="scientific">Orientia tsutsugamushi (strain Ikeda)</name>
    <name type="common">Rickettsia tsutsugamushi</name>
    <dbReference type="NCBI Taxonomy" id="334380"/>
    <lineage>
        <taxon>Bacteria</taxon>
        <taxon>Pseudomonadati</taxon>
        <taxon>Pseudomonadota</taxon>
        <taxon>Alphaproteobacteria</taxon>
        <taxon>Rickettsiales</taxon>
        <taxon>Rickettsiaceae</taxon>
        <taxon>Rickettsieae</taxon>
        <taxon>Orientia</taxon>
    </lineage>
</organism>
<protein>
    <recommendedName>
        <fullName evidence="1">Ferredoxin--NADP reductase</fullName>
        <shortName evidence="1">FNR</shortName>
        <shortName evidence="1">Fd-NADP(+) reductase</shortName>
        <ecNumber evidence="1">1.18.1.2</ecNumber>
    </recommendedName>
</protein>
<feature type="chain" id="PRO_0000364892" description="Ferredoxin--NADP reductase">
    <location>
        <begin position="1"/>
        <end position="338"/>
    </location>
</feature>
<feature type="binding site" evidence="1">
    <location>
        <position position="38"/>
    </location>
    <ligand>
        <name>FAD</name>
        <dbReference type="ChEBI" id="CHEBI:57692"/>
    </ligand>
</feature>
<feature type="binding site" evidence="1">
    <location>
        <position position="46"/>
    </location>
    <ligand>
        <name>FAD</name>
        <dbReference type="ChEBI" id="CHEBI:57692"/>
    </ligand>
</feature>
<feature type="binding site" evidence="1">
    <location>
        <position position="51"/>
    </location>
    <ligand>
        <name>FAD</name>
        <dbReference type="ChEBI" id="CHEBI:57692"/>
    </ligand>
</feature>
<feature type="binding site" evidence="1">
    <location>
        <position position="91"/>
    </location>
    <ligand>
        <name>FAD</name>
        <dbReference type="ChEBI" id="CHEBI:57692"/>
    </ligand>
</feature>
<feature type="binding site" evidence="1">
    <location>
        <position position="125"/>
    </location>
    <ligand>
        <name>FAD</name>
        <dbReference type="ChEBI" id="CHEBI:57692"/>
    </ligand>
</feature>
<feature type="binding site" evidence="1">
    <location>
        <position position="291"/>
    </location>
    <ligand>
        <name>FAD</name>
        <dbReference type="ChEBI" id="CHEBI:57692"/>
    </ligand>
</feature>
<feature type="binding site" evidence="1">
    <location>
        <position position="331"/>
    </location>
    <ligand>
        <name>FAD</name>
        <dbReference type="ChEBI" id="CHEBI:57692"/>
    </ligand>
</feature>
<comment type="catalytic activity">
    <reaction evidence="1">
        <text>2 reduced [2Fe-2S]-[ferredoxin] + NADP(+) + H(+) = 2 oxidized [2Fe-2S]-[ferredoxin] + NADPH</text>
        <dbReference type="Rhea" id="RHEA:20125"/>
        <dbReference type="Rhea" id="RHEA-COMP:10000"/>
        <dbReference type="Rhea" id="RHEA-COMP:10001"/>
        <dbReference type="ChEBI" id="CHEBI:15378"/>
        <dbReference type="ChEBI" id="CHEBI:33737"/>
        <dbReference type="ChEBI" id="CHEBI:33738"/>
        <dbReference type="ChEBI" id="CHEBI:57783"/>
        <dbReference type="ChEBI" id="CHEBI:58349"/>
        <dbReference type="EC" id="1.18.1.2"/>
    </reaction>
</comment>
<comment type="cofactor">
    <cofactor evidence="1">
        <name>FAD</name>
        <dbReference type="ChEBI" id="CHEBI:57692"/>
    </cofactor>
    <text evidence="1">Binds 1 FAD per subunit.</text>
</comment>
<comment type="subunit">
    <text evidence="1">Homodimer.</text>
</comment>
<comment type="similarity">
    <text evidence="1">Belongs to the ferredoxin--NADP reductase type 2 family.</text>
</comment>
<dbReference type="EC" id="1.18.1.2" evidence="1"/>
<dbReference type="EMBL" id="AP008981">
    <property type="protein sequence ID" value="BAG40780.1"/>
    <property type="molecule type" value="Genomic_DNA"/>
</dbReference>
<dbReference type="RefSeq" id="WP_012461828.1">
    <property type="nucleotide sequence ID" value="NC_010793.1"/>
</dbReference>
<dbReference type="SMR" id="B3CTT3"/>
<dbReference type="KEGG" id="ott:OTT_1322"/>
<dbReference type="HOGENOM" id="CLU_031864_5_5_5"/>
<dbReference type="OrthoDB" id="9806179at2"/>
<dbReference type="Proteomes" id="UP000001033">
    <property type="component" value="Chromosome"/>
</dbReference>
<dbReference type="GO" id="GO:0004324">
    <property type="term" value="F:ferredoxin-NADP+ reductase activity"/>
    <property type="evidence" value="ECO:0007669"/>
    <property type="project" value="UniProtKB-UniRule"/>
</dbReference>
<dbReference type="GO" id="GO:0050660">
    <property type="term" value="F:flavin adenine dinucleotide binding"/>
    <property type="evidence" value="ECO:0007669"/>
    <property type="project" value="UniProtKB-UniRule"/>
</dbReference>
<dbReference type="GO" id="GO:0050661">
    <property type="term" value="F:NADP binding"/>
    <property type="evidence" value="ECO:0007669"/>
    <property type="project" value="UniProtKB-UniRule"/>
</dbReference>
<dbReference type="Gene3D" id="3.50.50.60">
    <property type="entry name" value="FAD/NAD(P)-binding domain"/>
    <property type="match status" value="2"/>
</dbReference>
<dbReference type="HAMAP" id="MF_01685">
    <property type="entry name" value="FENR2"/>
    <property type="match status" value="1"/>
</dbReference>
<dbReference type="InterPro" id="IPR036188">
    <property type="entry name" value="FAD/NAD-bd_sf"/>
</dbReference>
<dbReference type="InterPro" id="IPR023753">
    <property type="entry name" value="FAD/NAD-binding_dom"/>
</dbReference>
<dbReference type="InterPro" id="IPR022890">
    <property type="entry name" value="Fd--NADP_Rdtase_type_2"/>
</dbReference>
<dbReference type="InterPro" id="IPR050097">
    <property type="entry name" value="Ferredoxin-NADP_redctase_2"/>
</dbReference>
<dbReference type="PANTHER" id="PTHR48105">
    <property type="entry name" value="THIOREDOXIN REDUCTASE 1-RELATED-RELATED"/>
    <property type="match status" value="1"/>
</dbReference>
<dbReference type="Pfam" id="PF07992">
    <property type="entry name" value="Pyr_redox_2"/>
    <property type="match status" value="1"/>
</dbReference>
<dbReference type="PRINTS" id="PR00368">
    <property type="entry name" value="FADPNR"/>
</dbReference>
<dbReference type="PRINTS" id="PR00469">
    <property type="entry name" value="PNDRDTASEII"/>
</dbReference>
<dbReference type="SUPFAM" id="SSF51905">
    <property type="entry name" value="FAD/NAD(P)-binding domain"/>
    <property type="match status" value="1"/>
</dbReference>
<keyword id="KW-0274">FAD</keyword>
<keyword id="KW-0285">Flavoprotein</keyword>
<keyword id="KW-0521">NADP</keyword>
<keyword id="KW-0560">Oxidoreductase</keyword>
<sequence length="338" mass="37018">MLSKNVHTTDVVIVGAGPVGLFAVFQAGMLEMKCHVVDALDCIGGQCVTLYPDKPIYDIPAYPVITAAELIEQLKQQSAPFDTVYHLGQQVIGCKIDNDMITITTSAEQVICAKSLIIAAGCGAFKYKRLTLDNIEAFENKTVFYSVKDKNKFINKKVVIAGGGDSAIDWTLLLSDVAEVIYLVHRRENFRCAPHSLNQIKKLAECGKVQMIVPYQLAKLTGENGLLQEVLVTNFDGGAQTLPADYLLAFFGLAADLGPIHKWGLKTDLRRIEVNSITYETTIPGIYAIGDVASYPGKLKLILTGFAEAATAMSHCYQRVFGKKMHFQYSTVKGVLRS</sequence>
<proteinExistence type="inferred from homology"/>
<evidence type="ECO:0000255" key="1">
    <source>
        <dbReference type="HAMAP-Rule" id="MF_01685"/>
    </source>
</evidence>
<name>FENR_ORITI</name>
<accession>B3CTT3</accession>